<gene>
    <name type="primary">ACTR6</name>
</gene>
<protein>
    <recommendedName>
        <fullName>Actin-related protein 6</fullName>
        <shortName>gArp6</shortName>
    </recommendedName>
    <alternativeName>
        <fullName>gARPX</fullName>
    </alternativeName>
</protein>
<sequence length="396" mass="45784">MATLVLDNGAYNAKIGYSHAHVSVIPNCQFRSKTARLKTFTANQLDEIKDPSGLFYILPFQKGYLVNWDVQRQVWDYLFGKEMYQVDFVDTNIIITEPYFNFSSIQESMNEILFEEYQFQAVLRVNAGALSAHRYFRDNPSELCCIIVDSGYSFTHIVPYCRSKKKKEAIIRINVGGKLLTNHLKEIISYRQLHVMDETHVINQVKEDVCYVSQDFYKDMEIAKLKGEENTVMVDYVLPDFSTIKKGFCKPREEMVLSGKYKTGEQILRLTNERFAVPEILFHPSDIGIQEMGIPEAIVDSIQNLPEEMQPHFFKNIVLTGGNTLFPGFRDRVYSEVRCLTPTDYDVSVVLPENPITYSWEGGKLISENDDFEDLVVTREDYEEHGHNICEEKFDI</sequence>
<reference key="1">
    <citation type="journal article" date="2001" name="Gene">
        <title>Novel actin-related proteins in vertebrates: similarities of structure and expression pattern to Arp6 localized on Drosophila heterochromatin.</title>
        <authorList>
            <person name="Kato M."/>
            <person name="Sasaki M."/>
            <person name="Mizuno S."/>
            <person name="Harata M."/>
        </authorList>
    </citation>
    <scope>NUCLEOTIDE SEQUENCE [MRNA]</scope>
    <scope>DEVELOPMENTAL STAGE</scope>
    <source>
        <tissue>Gonad</tissue>
    </source>
</reference>
<reference key="2">
    <citation type="journal article" date="2006" name="Eur. J. Cell Biol.">
        <title>Vertebrate Arp6, a novel nuclear actin-related protein, interacts with heterochromatin protein 1.</title>
        <authorList>
            <person name="Ohfuchi E."/>
            <person name="Kato M."/>
            <person name="Sasaki M."/>
            <person name="Sugimoto K."/>
            <person name="Oma Y."/>
            <person name="Harata M."/>
        </authorList>
    </citation>
    <scope>SUBCELLULAR LOCATION</scope>
    <scope>INTERACTION WITH CBX1 AND CBX3</scope>
</reference>
<reference key="3">
    <citation type="journal article" date="2015" name="Biochem. Biophys. Res. Commun.">
        <title>The actin family protein ARP6 contributes to the structure and the function of the nucleolus.</title>
        <authorList>
            <person name="Kitamura H."/>
            <person name="Matsumori H."/>
            <person name="Kalendova A."/>
            <person name="Hozak P."/>
            <person name="Goldberg I.G."/>
            <person name="Nakao M."/>
            <person name="Saitoh N."/>
            <person name="Harata M."/>
        </authorList>
    </citation>
    <scope>FUNCTION</scope>
</reference>
<comment type="function">
    <text evidence="2 5">Required for formation and/or maintenance of the proper nucleolar structure and function (By similarity). Plays a dual role in the regulation of ribosomal DNA (rDNA) transcription (PubMed:26164235). In the presence of high glucose, it maintains active rDNA transcription through H2A.Z deposition and under glucose starvation, is required for the repression of rDNA transcription, and this function may be independent of H2A.Z (PubMed:26164235).</text>
</comment>
<comment type="subunit">
    <text evidence="4">Interacts with CBX1 and CBX3.</text>
</comment>
<comment type="subcellular location">
    <subcellularLocation>
        <location evidence="1">Cytoplasm</location>
        <location evidence="1">Cytoskeleton</location>
    </subcellularLocation>
    <subcellularLocation>
        <location evidence="4">Nucleus</location>
    </subcellularLocation>
    <subcellularLocation>
        <location evidence="2">Nucleus</location>
        <location evidence="2">Nucleolus</location>
    </subcellularLocation>
    <text evidence="4">Colocalizes with HP1 family proteins at pericentric heterochromatin.</text>
</comment>
<comment type="developmental stage">
    <text evidence="3">Expressed abundantly in the early developmental stages.</text>
</comment>
<comment type="similarity">
    <text evidence="6">Belongs to the actin family. ARP6 subfamily.</text>
</comment>
<name>ARP6_CHICK</name>
<keyword id="KW-0010">Activator</keyword>
<keyword id="KW-0963">Cytoplasm</keyword>
<keyword id="KW-0206">Cytoskeleton</keyword>
<keyword id="KW-0539">Nucleus</keyword>
<keyword id="KW-1185">Reference proteome</keyword>
<keyword id="KW-0678">Repressor</keyword>
<keyword id="KW-0804">Transcription</keyword>
<keyword id="KW-0805">Transcription regulation</keyword>
<evidence type="ECO:0000250" key="1">
    <source>
        <dbReference type="UniProtKB" id="P45890"/>
    </source>
</evidence>
<evidence type="ECO:0000250" key="2">
    <source>
        <dbReference type="UniProtKB" id="Q9GZN1"/>
    </source>
</evidence>
<evidence type="ECO:0000269" key="3">
    <source>
    </source>
</evidence>
<evidence type="ECO:0000269" key="4">
    <source>
    </source>
</evidence>
<evidence type="ECO:0000269" key="5">
    <source>
    </source>
</evidence>
<evidence type="ECO:0000305" key="6"/>
<accession>Q9DEE9</accession>
<feature type="chain" id="PRO_0000089107" description="Actin-related protein 6">
    <location>
        <begin position="1"/>
        <end position="396"/>
    </location>
</feature>
<dbReference type="EMBL" id="AB038230">
    <property type="protein sequence ID" value="BAB20763.1"/>
    <property type="molecule type" value="mRNA"/>
</dbReference>
<dbReference type="RefSeq" id="NP_989968.1">
    <property type="nucleotide sequence ID" value="NM_204637.2"/>
</dbReference>
<dbReference type="SMR" id="Q9DEE9"/>
<dbReference type="FunCoup" id="Q9DEE9">
    <property type="interactions" value="1239"/>
</dbReference>
<dbReference type="STRING" id="9031.ENSGALP00000045330"/>
<dbReference type="PaxDb" id="9031-ENSGALP00000018828"/>
<dbReference type="GeneID" id="395348"/>
<dbReference type="KEGG" id="gga:395348"/>
<dbReference type="CTD" id="64431"/>
<dbReference type="VEuPathDB" id="HostDB:geneid_395348"/>
<dbReference type="eggNOG" id="KOG0680">
    <property type="taxonomic scope" value="Eukaryota"/>
</dbReference>
<dbReference type="InParanoid" id="Q9DEE9"/>
<dbReference type="OMA" id="FFEEYEC"/>
<dbReference type="OrthoDB" id="6220758at2759"/>
<dbReference type="PhylomeDB" id="Q9DEE9"/>
<dbReference type="TreeFam" id="TF105780"/>
<dbReference type="PRO" id="PR:Q9DEE9"/>
<dbReference type="Proteomes" id="UP000000539">
    <property type="component" value="Chromosome 1"/>
</dbReference>
<dbReference type="Bgee" id="ENSGALG00000040976">
    <property type="expression patterns" value="Expressed in spermatid and 14 other cell types or tissues"/>
</dbReference>
<dbReference type="GO" id="GO:0005737">
    <property type="term" value="C:cytoplasm"/>
    <property type="evidence" value="ECO:0007669"/>
    <property type="project" value="UniProtKB-KW"/>
</dbReference>
<dbReference type="GO" id="GO:0005856">
    <property type="term" value="C:cytoskeleton"/>
    <property type="evidence" value="ECO:0007669"/>
    <property type="project" value="UniProtKB-SubCell"/>
</dbReference>
<dbReference type="GO" id="GO:0005730">
    <property type="term" value="C:nucleolus"/>
    <property type="evidence" value="ECO:0000250"/>
    <property type="project" value="UniProtKB"/>
</dbReference>
<dbReference type="GO" id="GO:0005634">
    <property type="term" value="C:nucleus"/>
    <property type="evidence" value="ECO:0000314"/>
    <property type="project" value="AgBase"/>
</dbReference>
<dbReference type="GO" id="GO:0000812">
    <property type="term" value="C:Swr1 complex"/>
    <property type="evidence" value="ECO:0000318"/>
    <property type="project" value="GO_Central"/>
</dbReference>
<dbReference type="GO" id="GO:0031491">
    <property type="term" value="F:nucleosome binding"/>
    <property type="evidence" value="ECO:0000318"/>
    <property type="project" value="GO_Central"/>
</dbReference>
<dbReference type="GO" id="GO:0016479">
    <property type="term" value="P:negative regulation of transcription by RNA polymerase I"/>
    <property type="evidence" value="ECO:0000315"/>
    <property type="project" value="UniProtKB"/>
</dbReference>
<dbReference type="GO" id="GO:0007000">
    <property type="term" value="P:nucleolus organization"/>
    <property type="evidence" value="ECO:0000250"/>
    <property type="project" value="UniProtKB"/>
</dbReference>
<dbReference type="GO" id="GO:0045943">
    <property type="term" value="P:positive regulation of transcription by RNA polymerase I"/>
    <property type="evidence" value="ECO:0000315"/>
    <property type="project" value="UniProtKB"/>
</dbReference>
<dbReference type="CDD" id="cd10210">
    <property type="entry name" value="ASKHA_NBD_Arp6"/>
    <property type="match status" value="1"/>
</dbReference>
<dbReference type="FunFam" id="2.30.36.70:FF:000003">
    <property type="entry name" value="Actin-related protein 6"/>
    <property type="match status" value="1"/>
</dbReference>
<dbReference type="FunFam" id="3.30.420.40:FF:000599">
    <property type="entry name" value="Actin-related protein 6"/>
    <property type="match status" value="1"/>
</dbReference>
<dbReference type="FunFam" id="3.30.420.40:FF:000601">
    <property type="entry name" value="Actin-related protein 6"/>
    <property type="match status" value="1"/>
</dbReference>
<dbReference type="FunFam" id="3.90.640.10:FF:000014">
    <property type="entry name" value="Putative actin-related protein 6"/>
    <property type="match status" value="1"/>
</dbReference>
<dbReference type="Gene3D" id="3.30.420.40">
    <property type="match status" value="2"/>
</dbReference>
<dbReference type="Gene3D" id="2.30.36.70">
    <property type="entry name" value="Actin, Chain A, domain 2"/>
    <property type="match status" value="1"/>
</dbReference>
<dbReference type="Gene3D" id="3.90.640.10">
    <property type="entry name" value="Actin, Chain A, domain 4"/>
    <property type="match status" value="1"/>
</dbReference>
<dbReference type="InterPro" id="IPR004000">
    <property type="entry name" value="Actin"/>
</dbReference>
<dbReference type="InterPro" id="IPR043129">
    <property type="entry name" value="ATPase_NBD"/>
</dbReference>
<dbReference type="PANTHER" id="PTHR11937">
    <property type="entry name" value="ACTIN"/>
    <property type="match status" value="1"/>
</dbReference>
<dbReference type="Pfam" id="PF00022">
    <property type="entry name" value="Actin"/>
    <property type="match status" value="1"/>
</dbReference>
<dbReference type="SMART" id="SM00268">
    <property type="entry name" value="ACTIN"/>
    <property type="match status" value="1"/>
</dbReference>
<dbReference type="SUPFAM" id="SSF53067">
    <property type="entry name" value="Actin-like ATPase domain"/>
    <property type="match status" value="2"/>
</dbReference>
<organism>
    <name type="scientific">Gallus gallus</name>
    <name type="common">Chicken</name>
    <dbReference type="NCBI Taxonomy" id="9031"/>
    <lineage>
        <taxon>Eukaryota</taxon>
        <taxon>Metazoa</taxon>
        <taxon>Chordata</taxon>
        <taxon>Craniata</taxon>
        <taxon>Vertebrata</taxon>
        <taxon>Euteleostomi</taxon>
        <taxon>Archelosauria</taxon>
        <taxon>Archosauria</taxon>
        <taxon>Dinosauria</taxon>
        <taxon>Saurischia</taxon>
        <taxon>Theropoda</taxon>
        <taxon>Coelurosauria</taxon>
        <taxon>Aves</taxon>
        <taxon>Neognathae</taxon>
        <taxon>Galloanserae</taxon>
        <taxon>Galliformes</taxon>
        <taxon>Phasianidae</taxon>
        <taxon>Phasianinae</taxon>
        <taxon>Gallus</taxon>
    </lineage>
</organism>
<proteinExistence type="evidence at protein level"/>